<comment type="function">
    <text evidence="1">Catalyzes a trans-dehydration via an enolate intermediate.</text>
</comment>
<comment type="catalytic activity">
    <reaction evidence="1">
        <text>3-dehydroquinate = 3-dehydroshikimate + H2O</text>
        <dbReference type="Rhea" id="RHEA:21096"/>
        <dbReference type="ChEBI" id="CHEBI:15377"/>
        <dbReference type="ChEBI" id="CHEBI:16630"/>
        <dbReference type="ChEBI" id="CHEBI:32364"/>
        <dbReference type="EC" id="4.2.1.10"/>
    </reaction>
</comment>
<comment type="pathway">
    <text evidence="1">Metabolic intermediate biosynthesis; chorismate biosynthesis; chorismate from D-erythrose 4-phosphate and phosphoenolpyruvate: step 3/7.</text>
</comment>
<comment type="subunit">
    <text evidence="1">Homododecamer.</text>
</comment>
<comment type="similarity">
    <text evidence="1">Belongs to the type-II 3-dehydroquinase family.</text>
</comment>
<accession>Q111G7</accession>
<protein>
    <recommendedName>
        <fullName evidence="1">3-dehydroquinate dehydratase</fullName>
        <shortName evidence="1">3-dehydroquinase</shortName>
        <ecNumber evidence="1">4.2.1.10</ecNumber>
    </recommendedName>
    <alternativeName>
        <fullName evidence="1">Type II DHQase</fullName>
    </alternativeName>
</protein>
<sequence length="150" mass="16368">MFLFNILVLHGPNLNLLGLREPGIYGSVTLDNINRLLKQEAEAIGVKISISQSNHEGVLVDLIHSSSEQHQGILINAGAYTHTSVAIRDAISGINIPTVEVHLSNIYSREEFRHHSFIAPVAIGQISGFGSQSYLLGLKAIVNYLKNRGD</sequence>
<gene>
    <name evidence="1" type="primary">aroQ</name>
    <name type="ordered locus">Tery_2664</name>
</gene>
<dbReference type="EC" id="4.2.1.10" evidence="1"/>
<dbReference type="EMBL" id="CP000393">
    <property type="protein sequence ID" value="ABG51857.1"/>
    <property type="molecule type" value="Genomic_DNA"/>
</dbReference>
<dbReference type="SMR" id="Q111G7"/>
<dbReference type="STRING" id="203124.Tery_2664"/>
<dbReference type="KEGG" id="ter:Tery_2664"/>
<dbReference type="eggNOG" id="COG0757">
    <property type="taxonomic scope" value="Bacteria"/>
</dbReference>
<dbReference type="HOGENOM" id="CLU_090968_1_0_3"/>
<dbReference type="UniPathway" id="UPA00053">
    <property type="reaction ID" value="UER00086"/>
</dbReference>
<dbReference type="GO" id="GO:0003855">
    <property type="term" value="F:3-dehydroquinate dehydratase activity"/>
    <property type="evidence" value="ECO:0007669"/>
    <property type="project" value="UniProtKB-UniRule"/>
</dbReference>
<dbReference type="GO" id="GO:0008652">
    <property type="term" value="P:amino acid biosynthetic process"/>
    <property type="evidence" value="ECO:0007669"/>
    <property type="project" value="UniProtKB-KW"/>
</dbReference>
<dbReference type="GO" id="GO:0009073">
    <property type="term" value="P:aromatic amino acid family biosynthetic process"/>
    <property type="evidence" value="ECO:0007669"/>
    <property type="project" value="UniProtKB-KW"/>
</dbReference>
<dbReference type="GO" id="GO:0009423">
    <property type="term" value="P:chorismate biosynthetic process"/>
    <property type="evidence" value="ECO:0007669"/>
    <property type="project" value="UniProtKB-UniRule"/>
</dbReference>
<dbReference type="GO" id="GO:0019631">
    <property type="term" value="P:quinate catabolic process"/>
    <property type="evidence" value="ECO:0007669"/>
    <property type="project" value="TreeGrafter"/>
</dbReference>
<dbReference type="CDD" id="cd00466">
    <property type="entry name" value="DHQase_II"/>
    <property type="match status" value="1"/>
</dbReference>
<dbReference type="Gene3D" id="3.40.50.9100">
    <property type="entry name" value="Dehydroquinase, class II"/>
    <property type="match status" value="1"/>
</dbReference>
<dbReference type="HAMAP" id="MF_00169">
    <property type="entry name" value="AroQ"/>
    <property type="match status" value="1"/>
</dbReference>
<dbReference type="InterPro" id="IPR001874">
    <property type="entry name" value="DHquinase_II"/>
</dbReference>
<dbReference type="InterPro" id="IPR018509">
    <property type="entry name" value="DHquinase_II_CS"/>
</dbReference>
<dbReference type="InterPro" id="IPR036441">
    <property type="entry name" value="DHquinase_II_sf"/>
</dbReference>
<dbReference type="NCBIfam" id="TIGR01088">
    <property type="entry name" value="aroQ"/>
    <property type="match status" value="1"/>
</dbReference>
<dbReference type="NCBIfam" id="NF003804">
    <property type="entry name" value="PRK05395.1-1"/>
    <property type="match status" value="1"/>
</dbReference>
<dbReference type="NCBIfam" id="NF003805">
    <property type="entry name" value="PRK05395.1-2"/>
    <property type="match status" value="1"/>
</dbReference>
<dbReference type="NCBIfam" id="NF003806">
    <property type="entry name" value="PRK05395.1-3"/>
    <property type="match status" value="1"/>
</dbReference>
<dbReference type="NCBIfam" id="NF003807">
    <property type="entry name" value="PRK05395.1-4"/>
    <property type="match status" value="1"/>
</dbReference>
<dbReference type="PANTHER" id="PTHR21272">
    <property type="entry name" value="CATABOLIC 3-DEHYDROQUINASE"/>
    <property type="match status" value="1"/>
</dbReference>
<dbReference type="PANTHER" id="PTHR21272:SF3">
    <property type="entry name" value="CATABOLIC 3-DEHYDROQUINASE"/>
    <property type="match status" value="1"/>
</dbReference>
<dbReference type="Pfam" id="PF01220">
    <property type="entry name" value="DHquinase_II"/>
    <property type="match status" value="1"/>
</dbReference>
<dbReference type="PIRSF" id="PIRSF001399">
    <property type="entry name" value="DHquinase_II"/>
    <property type="match status" value="1"/>
</dbReference>
<dbReference type="SUPFAM" id="SSF52304">
    <property type="entry name" value="Type II 3-dehydroquinate dehydratase"/>
    <property type="match status" value="1"/>
</dbReference>
<dbReference type="PROSITE" id="PS01029">
    <property type="entry name" value="DEHYDROQUINASE_II"/>
    <property type="match status" value="1"/>
</dbReference>
<keyword id="KW-0028">Amino-acid biosynthesis</keyword>
<keyword id="KW-0057">Aromatic amino acid biosynthesis</keyword>
<keyword id="KW-0456">Lyase</keyword>
<evidence type="ECO:0000255" key="1">
    <source>
        <dbReference type="HAMAP-Rule" id="MF_00169"/>
    </source>
</evidence>
<proteinExistence type="inferred from homology"/>
<reference key="1">
    <citation type="journal article" date="2015" name="Proc. Natl. Acad. Sci. U.S.A.">
        <title>Trichodesmium genome maintains abundant, widespread noncoding DNA in situ, despite oligotrophic lifestyle.</title>
        <authorList>
            <person name="Walworth N."/>
            <person name="Pfreundt U."/>
            <person name="Nelson W.C."/>
            <person name="Mincer T."/>
            <person name="Heidelberg J.F."/>
            <person name="Fu F."/>
            <person name="Waterbury J.B."/>
            <person name="Glavina del Rio T."/>
            <person name="Goodwin L."/>
            <person name="Kyrpides N.C."/>
            <person name="Land M.L."/>
            <person name="Woyke T."/>
            <person name="Hutchins D.A."/>
            <person name="Hess W.R."/>
            <person name="Webb E.A."/>
        </authorList>
    </citation>
    <scope>NUCLEOTIDE SEQUENCE [LARGE SCALE GENOMIC DNA]</scope>
    <source>
        <strain>IMS101</strain>
    </source>
</reference>
<organism>
    <name type="scientific">Trichodesmium erythraeum (strain IMS101)</name>
    <dbReference type="NCBI Taxonomy" id="203124"/>
    <lineage>
        <taxon>Bacteria</taxon>
        <taxon>Bacillati</taxon>
        <taxon>Cyanobacteriota</taxon>
        <taxon>Cyanophyceae</taxon>
        <taxon>Oscillatoriophycideae</taxon>
        <taxon>Oscillatoriales</taxon>
        <taxon>Microcoleaceae</taxon>
        <taxon>Trichodesmium</taxon>
    </lineage>
</organism>
<feature type="chain" id="PRO_1000097630" description="3-dehydroquinate dehydratase">
    <location>
        <begin position="1"/>
        <end position="150"/>
    </location>
</feature>
<feature type="active site" description="Proton acceptor" evidence="1">
    <location>
        <position position="25"/>
    </location>
</feature>
<feature type="active site" description="Proton donor" evidence="1">
    <location>
        <position position="102"/>
    </location>
</feature>
<feature type="binding site" evidence="1">
    <location>
        <position position="76"/>
    </location>
    <ligand>
        <name>substrate</name>
    </ligand>
</feature>
<feature type="binding site" evidence="1">
    <location>
        <position position="82"/>
    </location>
    <ligand>
        <name>substrate</name>
    </ligand>
</feature>
<feature type="binding site" evidence="1">
    <location>
        <position position="89"/>
    </location>
    <ligand>
        <name>substrate</name>
    </ligand>
</feature>
<feature type="binding site" evidence="1">
    <location>
        <begin position="103"/>
        <end position="104"/>
    </location>
    <ligand>
        <name>substrate</name>
    </ligand>
</feature>
<feature type="binding site" evidence="1">
    <location>
        <position position="113"/>
    </location>
    <ligand>
        <name>substrate</name>
    </ligand>
</feature>
<feature type="site" description="Transition state stabilizer" evidence="1">
    <location>
        <position position="20"/>
    </location>
</feature>
<name>AROQ_TRIEI</name>